<organism>
    <name type="scientific">Zymomonas mobilis subsp. mobilis (strain ATCC 31821 / ZM4 / CP4)</name>
    <dbReference type="NCBI Taxonomy" id="264203"/>
    <lineage>
        <taxon>Bacteria</taxon>
        <taxon>Pseudomonadati</taxon>
        <taxon>Pseudomonadota</taxon>
        <taxon>Alphaproteobacteria</taxon>
        <taxon>Sphingomonadales</taxon>
        <taxon>Zymomonadaceae</taxon>
        <taxon>Zymomonas</taxon>
    </lineage>
</organism>
<dbReference type="EC" id="2.1.1.182" evidence="1"/>
<dbReference type="EMBL" id="AE008692">
    <property type="protein sequence ID" value="AAV89938.1"/>
    <property type="molecule type" value="Genomic_DNA"/>
</dbReference>
<dbReference type="RefSeq" id="WP_011241115.1">
    <property type="nucleotide sequence ID" value="NZ_CP035711.1"/>
</dbReference>
<dbReference type="SMR" id="Q5NMX2"/>
<dbReference type="STRING" id="264203.ZMO1314"/>
<dbReference type="GeneID" id="79903584"/>
<dbReference type="KEGG" id="zmo:ZMO1314"/>
<dbReference type="eggNOG" id="COG0030">
    <property type="taxonomic scope" value="Bacteria"/>
</dbReference>
<dbReference type="HOGENOM" id="CLU_041220_0_1_5"/>
<dbReference type="Proteomes" id="UP000001173">
    <property type="component" value="Chromosome"/>
</dbReference>
<dbReference type="GO" id="GO:0005829">
    <property type="term" value="C:cytosol"/>
    <property type="evidence" value="ECO:0007669"/>
    <property type="project" value="TreeGrafter"/>
</dbReference>
<dbReference type="GO" id="GO:0052908">
    <property type="term" value="F:16S rRNA (adenine(1518)-N(6)/adenine(1519)-N(6))-dimethyltransferase activity"/>
    <property type="evidence" value="ECO:0007669"/>
    <property type="project" value="UniProtKB-EC"/>
</dbReference>
<dbReference type="GO" id="GO:0003723">
    <property type="term" value="F:RNA binding"/>
    <property type="evidence" value="ECO:0007669"/>
    <property type="project" value="UniProtKB-KW"/>
</dbReference>
<dbReference type="CDD" id="cd02440">
    <property type="entry name" value="AdoMet_MTases"/>
    <property type="match status" value="1"/>
</dbReference>
<dbReference type="FunFam" id="1.10.8.100:FF:000001">
    <property type="entry name" value="Ribosomal RNA small subunit methyltransferase A"/>
    <property type="match status" value="1"/>
</dbReference>
<dbReference type="Gene3D" id="1.10.8.100">
    <property type="entry name" value="Ribosomal RNA adenine dimethylase-like, domain 2"/>
    <property type="match status" value="1"/>
</dbReference>
<dbReference type="Gene3D" id="3.40.50.150">
    <property type="entry name" value="Vaccinia Virus protein VP39"/>
    <property type="match status" value="1"/>
</dbReference>
<dbReference type="HAMAP" id="MF_00607">
    <property type="entry name" value="16SrRNA_methyltr_A"/>
    <property type="match status" value="1"/>
</dbReference>
<dbReference type="InterPro" id="IPR001737">
    <property type="entry name" value="KsgA/Erm"/>
</dbReference>
<dbReference type="InterPro" id="IPR023165">
    <property type="entry name" value="rRNA_Ade_diMease-like_C"/>
</dbReference>
<dbReference type="InterPro" id="IPR020596">
    <property type="entry name" value="rRNA_Ade_Mease_Trfase_CS"/>
</dbReference>
<dbReference type="InterPro" id="IPR020598">
    <property type="entry name" value="rRNA_Ade_methylase_Trfase_N"/>
</dbReference>
<dbReference type="InterPro" id="IPR011530">
    <property type="entry name" value="rRNA_adenine_dimethylase"/>
</dbReference>
<dbReference type="InterPro" id="IPR029063">
    <property type="entry name" value="SAM-dependent_MTases_sf"/>
</dbReference>
<dbReference type="NCBIfam" id="TIGR00755">
    <property type="entry name" value="ksgA"/>
    <property type="match status" value="1"/>
</dbReference>
<dbReference type="PANTHER" id="PTHR11727">
    <property type="entry name" value="DIMETHYLADENOSINE TRANSFERASE"/>
    <property type="match status" value="1"/>
</dbReference>
<dbReference type="PANTHER" id="PTHR11727:SF7">
    <property type="entry name" value="DIMETHYLADENOSINE TRANSFERASE-RELATED"/>
    <property type="match status" value="1"/>
</dbReference>
<dbReference type="Pfam" id="PF00398">
    <property type="entry name" value="RrnaAD"/>
    <property type="match status" value="1"/>
</dbReference>
<dbReference type="SMART" id="SM00650">
    <property type="entry name" value="rADc"/>
    <property type="match status" value="1"/>
</dbReference>
<dbReference type="SUPFAM" id="SSF53335">
    <property type="entry name" value="S-adenosyl-L-methionine-dependent methyltransferases"/>
    <property type="match status" value="1"/>
</dbReference>
<dbReference type="PROSITE" id="PS01131">
    <property type="entry name" value="RRNA_A_DIMETH"/>
    <property type="match status" value="1"/>
</dbReference>
<dbReference type="PROSITE" id="PS51689">
    <property type="entry name" value="SAM_RNA_A_N6_MT"/>
    <property type="match status" value="1"/>
</dbReference>
<comment type="function">
    <text evidence="1">Specifically dimethylates two adjacent adenosines (A1518 and A1519) in the loop of a conserved hairpin near the 3'-end of 16S rRNA in the 30S particle. May play a critical role in biogenesis of 30S subunits.</text>
</comment>
<comment type="catalytic activity">
    <reaction evidence="1">
        <text>adenosine(1518)/adenosine(1519) in 16S rRNA + 4 S-adenosyl-L-methionine = N(6)-dimethyladenosine(1518)/N(6)-dimethyladenosine(1519) in 16S rRNA + 4 S-adenosyl-L-homocysteine + 4 H(+)</text>
        <dbReference type="Rhea" id="RHEA:19609"/>
        <dbReference type="Rhea" id="RHEA-COMP:10232"/>
        <dbReference type="Rhea" id="RHEA-COMP:10233"/>
        <dbReference type="ChEBI" id="CHEBI:15378"/>
        <dbReference type="ChEBI" id="CHEBI:57856"/>
        <dbReference type="ChEBI" id="CHEBI:59789"/>
        <dbReference type="ChEBI" id="CHEBI:74411"/>
        <dbReference type="ChEBI" id="CHEBI:74493"/>
        <dbReference type="EC" id="2.1.1.182"/>
    </reaction>
</comment>
<comment type="subcellular location">
    <subcellularLocation>
        <location evidence="1">Cytoplasm</location>
    </subcellularLocation>
</comment>
<comment type="similarity">
    <text evidence="1">Belongs to the class I-like SAM-binding methyltransferase superfamily. rRNA adenine N(6)-methyltransferase family. RsmA subfamily.</text>
</comment>
<evidence type="ECO:0000255" key="1">
    <source>
        <dbReference type="HAMAP-Rule" id="MF_00607"/>
    </source>
</evidence>
<protein>
    <recommendedName>
        <fullName evidence="1">Ribosomal RNA small subunit methyltransferase A</fullName>
        <ecNumber evidence="1">2.1.1.182</ecNumber>
    </recommendedName>
    <alternativeName>
        <fullName evidence="1">16S rRNA (adenine(1518)-N(6)/adenine(1519)-N(6))-dimethyltransferase</fullName>
    </alternativeName>
    <alternativeName>
        <fullName evidence="1">16S rRNA dimethyladenosine transferase</fullName>
    </alternativeName>
    <alternativeName>
        <fullName evidence="1">16S rRNA dimethylase</fullName>
    </alternativeName>
    <alternativeName>
        <fullName evidence="1">S-adenosylmethionine-6-N', N'-adenosyl(rRNA) dimethyltransferase</fullName>
    </alternativeName>
</protein>
<keyword id="KW-0963">Cytoplasm</keyword>
<keyword id="KW-0489">Methyltransferase</keyword>
<keyword id="KW-1185">Reference proteome</keyword>
<keyword id="KW-0694">RNA-binding</keyword>
<keyword id="KW-0698">rRNA processing</keyword>
<keyword id="KW-0949">S-adenosyl-L-methionine</keyword>
<keyword id="KW-0808">Transferase</keyword>
<name>RSMA_ZYMMO</name>
<sequence>MLDQTLEPLRAVIARHGLSADKRLGQNFLLDSQLLDRIARVPGDLTQKTVYEVGPGPGGLTRALLKAGAKVTAVERDRRCLPALAELSAHFPDQLQVISGDAMEIDEAAVLGEHVHIVANLPYNVGTALLIRWLTAKTWQPWWSSLTLMFQKEVAERITAKVGTPHYGRLSVLAQWRSEAKLSFPVHRSAFVPPPKVMSAVVHLTPKDQPEGLSLGTLEKITAAAFNQRRKMLRQSLKNIEHMMEALELAGIDATRRPETVSVAEFIAIGRHWEKLSA</sequence>
<gene>
    <name evidence="1" type="primary">rsmA</name>
    <name evidence="1" type="synonym">ksgA</name>
    <name type="ordered locus">ZMO1314</name>
</gene>
<reference key="1">
    <citation type="journal article" date="2005" name="Nat. Biotechnol.">
        <title>The genome sequence of the ethanologenic bacterium Zymomonas mobilis ZM4.</title>
        <authorList>
            <person name="Seo J.-S."/>
            <person name="Chong H."/>
            <person name="Park H.S."/>
            <person name="Yoon K.-O."/>
            <person name="Jung C."/>
            <person name="Kim J.J."/>
            <person name="Hong J.H."/>
            <person name="Kim H."/>
            <person name="Kim J.-H."/>
            <person name="Kil J.-I."/>
            <person name="Park C.J."/>
            <person name="Oh H.-M."/>
            <person name="Lee J.-S."/>
            <person name="Jin S.-J."/>
            <person name="Um H.-W."/>
            <person name="Lee H.-J."/>
            <person name="Oh S.-J."/>
            <person name="Kim J.Y."/>
            <person name="Kang H.L."/>
            <person name="Lee S.Y."/>
            <person name="Lee K.J."/>
            <person name="Kang H.S."/>
        </authorList>
    </citation>
    <scope>NUCLEOTIDE SEQUENCE [LARGE SCALE GENOMIC DNA]</scope>
    <source>
        <strain>ATCC 31821 / ZM4 / CP4</strain>
    </source>
</reference>
<feature type="chain" id="PRO_0000101650" description="Ribosomal RNA small subunit methyltransferase A">
    <location>
        <begin position="1"/>
        <end position="278"/>
    </location>
</feature>
<feature type="binding site" evidence="1">
    <location>
        <position position="27"/>
    </location>
    <ligand>
        <name>S-adenosyl-L-methionine</name>
        <dbReference type="ChEBI" id="CHEBI:59789"/>
    </ligand>
</feature>
<feature type="binding site" evidence="1">
    <location>
        <position position="29"/>
    </location>
    <ligand>
        <name>S-adenosyl-L-methionine</name>
        <dbReference type="ChEBI" id="CHEBI:59789"/>
    </ligand>
</feature>
<feature type="binding site" evidence="1">
    <location>
        <position position="54"/>
    </location>
    <ligand>
        <name>S-adenosyl-L-methionine</name>
        <dbReference type="ChEBI" id="CHEBI:59789"/>
    </ligand>
</feature>
<feature type="binding site" evidence="1">
    <location>
        <position position="75"/>
    </location>
    <ligand>
        <name>S-adenosyl-L-methionine</name>
        <dbReference type="ChEBI" id="CHEBI:59789"/>
    </ligand>
</feature>
<feature type="binding site" evidence="1">
    <location>
        <position position="101"/>
    </location>
    <ligand>
        <name>S-adenosyl-L-methionine</name>
        <dbReference type="ChEBI" id="CHEBI:59789"/>
    </ligand>
</feature>
<feature type="binding site" evidence="1">
    <location>
        <position position="120"/>
    </location>
    <ligand>
        <name>S-adenosyl-L-methionine</name>
        <dbReference type="ChEBI" id="CHEBI:59789"/>
    </ligand>
</feature>
<accession>Q5NMX2</accession>
<proteinExistence type="inferred from homology"/>